<protein>
    <recommendedName>
        <fullName evidence="1">Isocitrate dehydrogenase kinase/phosphatase</fullName>
        <shortName evidence="1">IDH kinase/phosphatase</shortName>
        <shortName evidence="1">IDHK/P</shortName>
        <ecNumber evidence="1">2.7.11.5</ecNumber>
        <ecNumber evidence="1">3.1.3.-</ecNumber>
    </recommendedName>
</protein>
<reference key="1">
    <citation type="submission" date="2009-07" db="EMBL/GenBank/DDBJ databases">
        <title>Complete sequence of Pectobacterium carotovorum subsp. carotovorum PC1.</title>
        <authorList>
            <consortium name="US DOE Joint Genome Institute"/>
            <person name="Lucas S."/>
            <person name="Copeland A."/>
            <person name="Lapidus A."/>
            <person name="Glavina del Rio T."/>
            <person name="Tice H."/>
            <person name="Bruce D."/>
            <person name="Goodwin L."/>
            <person name="Pitluck S."/>
            <person name="Munk A.C."/>
            <person name="Brettin T."/>
            <person name="Detter J.C."/>
            <person name="Han C."/>
            <person name="Tapia R."/>
            <person name="Larimer F."/>
            <person name="Land M."/>
            <person name="Hauser L."/>
            <person name="Kyrpides N."/>
            <person name="Mikhailova N."/>
            <person name="Balakrishnan V."/>
            <person name="Glasner J."/>
            <person name="Perna N.T."/>
        </authorList>
    </citation>
    <scope>NUCLEOTIDE SEQUENCE [LARGE SCALE GENOMIC DNA]</scope>
    <source>
        <strain>PC1</strain>
    </source>
</reference>
<dbReference type="EC" id="2.7.11.5" evidence="1"/>
<dbReference type="EC" id="3.1.3.-" evidence="1"/>
<dbReference type="EMBL" id="CP001657">
    <property type="protein sequence ID" value="ACT14792.1"/>
    <property type="molecule type" value="Genomic_DNA"/>
</dbReference>
<dbReference type="RefSeq" id="WP_015841903.1">
    <property type="nucleotide sequence ID" value="NC_012917.1"/>
</dbReference>
<dbReference type="SMR" id="C6DFQ3"/>
<dbReference type="STRING" id="561230.PC1_3777"/>
<dbReference type="KEGG" id="pct:PC1_3777"/>
<dbReference type="eggNOG" id="COG4579">
    <property type="taxonomic scope" value="Bacteria"/>
</dbReference>
<dbReference type="HOGENOM" id="CLU_033804_1_1_6"/>
<dbReference type="OrthoDB" id="5287793at2"/>
<dbReference type="Proteomes" id="UP000002736">
    <property type="component" value="Chromosome"/>
</dbReference>
<dbReference type="GO" id="GO:0005737">
    <property type="term" value="C:cytoplasm"/>
    <property type="evidence" value="ECO:0007669"/>
    <property type="project" value="UniProtKB-SubCell"/>
</dbReference>
<dbReference type="GO" id="GO:0008772">
    <property type="term" value="F:[isocitrate dehydrogenase (NADP+)] kinase activity"/>
    <property type="evidence" value="ECO:0007669"/>
    <property type="project" value="UniProtKB-UniRule"/>
</dbReference>
<dbReference type="GO" id="GO:0016208">
    <property type="term" value="F:AMP binding"/>
    <property type="evidence" value="ECO:0007669"/>
    <property type="project" value="TreeGrafter"/>
</dbReference>
<dbReference type="GO" id="GO:0005524">
    <property type="term" value="F:ATP binding"/>
    <property type="evidence" value="ECO:0007669"/>
    <property type="project" value="UniProtKB-UniRule"/>
</dbReference>
<dbReference type="GO" id="GO:0004721">
    <property type="term" value="F:phosphoprotein phosphatase activity"/>
    <property type="evidence" value="ECO:0007669"/>
    <property type="project" value="UniProtKB-KW"/>
</dbReference>
<dbReference type="GO" id="GO:0004674">
    <property type="term" value="F:protein serine/threonine kinase activity"/>
    <property type="evidence" value="ECO:0007669"/>
    <property type="project" value="UniProtKB-KW"/>
</dbReference>
<dbReference type="GO" id="GO:0006006">
    <property type="term" value="P:glucose metabolic process"/>
    <property type="evidence" value="ECO:0007669"/>
    <property type="project" value="InterPro"/>
</dbReference>
<dbReference type="GO" id="GO:0006097">
    <property type="term" value="P:glyoxylate cycle"/>
    <property type="evidence" value="ECO:0007669"/>
    <property type="project" value="UniProtKB-UniRule"/>
</dbReference>
<dbReference type="GO" id="GO:0006099">
    <property type="term" value="P:tricarboxylic acid cycle"/>
    <property type="evidence" value="ECO:0007669"/>
    <property type="project" value="UniProtKB-UniRule"/>
</dbReference>
<dbReference type="HAMAP" id="MF_00747">
    <property type="entry name" value="AceK"/>
    <property type="match status" value="1"/>
</dbReference>
<dbReference type="InterPro" id="IPR046855">
    <property type="entry name" value="AceK_kinase"/>
</dbReference>
<dbReference type="InterPro" id="IPR046854">
    <property type="entry name" value="AceK_regulatory"/>
</dbReference>
<dbReference type="InterPro" id="IPR010452">
    <property type="entry name" value="Isocitrate_DH_AceK"/>
</dbReference>
<dbReference type="NCBIfam" id="NF002804">
    <property type="entry name" value="PRK02946.1"/>
    <property type="match status" value="1"/>
</dbReference>
<dbReference type="PANTHER" id="PTHR39559">
    <property type="match status" value="1"/>
</dbReference>
<dbReference type="PANTHER" id="PTHR39559:SF1">
    <property type="entry name" value="ISOCITRATE DEHYDROGENASE KINASE_PHOSPHATASE"/>
    <property type="match status" value="1"/>
</dbReference>
<dbReference type="Pfam" id="PF06315">
    <property type="entry name" value="AceK_kinase"/>
    <property type="match status" value="1"/>
</dbReference>
<dbReference type="Pfam" id="PF20423">
    <property type="entry name" value="AceK_regulatory"/>
    <property type="match status" value="1"/>
</dbReference>
<dbReference type="PIRSF" id="PIRSF000719">
    <property type="entry name" value="AceK"/>
    <property type="match status" value="1"/>
</dbReference>
<organism>
    <name type="scientific">Pectobacterium carotovorum subsp. carotovorum (strain PC1)</name>
    <dbReference type="NCBI Taxonomy" id="561230"/>
    <lineage>
        <taxon>Bacteria</taxon>
        <taxon>Pseudomonadati</taxon>
        <taxon>Pseudomonadota</taxon>
        <taxon>Gammaproteobacteria</taxon>
        <taxon>Enterobacterales</taxon>
        <taxon>Pectobacteriaceae</taxon>
        <taxon>Pectobacterium</taxon>
    </lineage>
</organism>
<proteinExistence type="inferred from homology"/>
<name>ACEK_PECCP</name>
<keyword id="KW-0067">ATP-binding</keyword>
<keyword id="KW-0963">Cytoplasm</keyword>
<keyword id="KW-0329">Glyoxylate bypass</keyword>
<keyword id="KW-0378">Hydrolase</keyword>
<keyword id="KW-0418">Kinase</keyword>
<keyword id="KW-0547">Nucleotide-binding</keyword>
<keyword id="KW-0904">Protein phosphatase</keyword>
<keyword id="KW-0723">Serine/threonine-protein kinase</keyword>
<keyword id="KW-0808">Transferase</keyword>
<keyword id="KW-0816">Tricarboxylic acid cycle</keyword>
<gene>
    <name evidence="1" type="primary">aceK</name>
    <name type="ordered locus">PC1_3777</name>
</gene>
<accession>C6DFQ3</accession>
<evidence type="ECO:0000255" key="1">
    <source>
        <dbReference type="HAMAP-Rule" id="MF_00747"/>
    </source>
</evidence>
<comment type="function">
    <text evidence="1">Bifunctional enzyme which can phosphorylate or dephosphorylate isocitrate dehydrogenase (IDH) on a specific serine residue. This is a regulatory mechanism which enables bacteria to bypass the Krebs cycle via the glyoxylate shunt in response to the source of carbon. When bacteria are grown on glucose, IDH is fully active and unphosphorylated, but when grown on acetate or ethanol, the activity of IDH declines drastically concomitant with its phosphorylation.</text>
</comment>
<comment type="catalytic activity">
    <reaction evidence="1">
        <text>L-seryl-[isocitrate dehydrogenase] + ATP = O-phospho-L-seryl-[isocitrate dehydrogenase] + ADP + H(+)</text>
        <dbReference type="Rhea" id="RHEA:43540"/>
        <dbReference type="Rhea" id="RHEA-COMP:10605"/>
        <dbReference type="Rhea" id="RHEA-COMP:10606"/>
        <dbReference type="ChEBI" id="CHEBI:15378"/>
        <dbReference type="ChEBI" id="CHEBI:29999"/>
        <dbReference type="ChEBI" id="CHEBI:30616"/>
        <dbReference type="ChEBI" id="CHEBI:83421"/>
        <dbReference type="ChEBI" id="CHEBI:456216"/>
        <dbReference type="EC" id="2.7.11.5"/>
    </reaction>
</comment>
<comment type="subcellular location">
    <subcellularLocation>
        <location evidence="1">Cytoplasm</location>
    </subcellularLocation>
</comment>
<comment type="similarity">
    <text evidence="1">Belongs to the AceK family.</text>
</comment>
<feature type="chain" id="PRO_1000212844" description="Isocitrate dehydrogenase kinase/phosphatase">
    <location>
        <begin position="1"/>
        <end position="591"/>
    </location>
</feature>
<feature type="active site" evidence="1">
    <location>
        <position position="371"/>
    </location>
</feature>
<feature type="binding site" evidence="1">
    <location>
        <begin position="315"/>
        <end position="321"/>
    </location>
    <ligand>
        <name>ATP</name>
        <dbReference type="ChEBI" id="CHEBI:30616"/>
    </ligand>
</feature>
<feature type="binding site" evidence="1">
    <location>
        <position position="336"/>
    </location>
    <ligand>
        <name>ATP</name>
        <dbReference type="ChEBI" id="CHEBI:30616"/>
    </ligand>
</feature>
<sequence length="591" mass="69249">MTRDLEKLVAQTILQGFDAQYGRFLEVTAGAQQRFEQADWPAVQQAMKQRIHLYDHHVGLVVEQLRCITGIRCDDADFLARVKHIYTRLLPDYPRFEIAESFFNSVYCRLFNHRELTPDKLFVFSSQPEQRFREIPRPIAKTFVPTDGWQNMLEKLLSDVPLRLPWEDLPRDIGYIVAYLQRTFSAEQLAQATLQMANELFYRNKAAWLVGKLSLPDGIFPFLLPIHHNERGALFIDTCLTSQADASIVFGFARSYFMVYAPLPSALVAWLRDILPGKTTAELYLAIGCQKHSKTEYYREYLHYIAESEEQFIIAPGVKGMVMLVFTLPSFDRVFKVIKDRFAPQKEVSAERVMACYQLVKEHDRVGRMADTQEYENFVIDKHRISSELLDELWREVPDKLEDLGDRLVIRHLYMERRMTPLNLYLEQANAQQLHDVIEEYGNAIKQLAAANIFPGDMLFKNFGVTRHGRVVFYDYDEICYMTEVNFRKIPPPRHPEDELAAEPWYSVAPNDVFPEEFPHFLCSDRHIRTLFEEMHGDLFCADYWRALQQRIREGHIEDVYAYRRRKRFSQRADPRYTTAENDSGFCRNPA</sequence>